<proteinExistence type="evidence at protein level"/>
<reference key="1">
    <citation type="journal article" date="1998" name="Nature">
        <title>Deciphering the biology of Mycobacterium tuberculosis from the complete genome sequence.</title>
        <authorList>
            <person name="Cole S.T."/>
            <person name="Brosch R."/>
            <person name="Parkhill J."/>
            <person name="Garnier T."/>
            <person name="Churcher C.M."/>
            <person name="Harris D.E."/>
            <person name="Gordon S.V."/>
            <person name="Eiglmeier K."/>
            <person name="Gas S."/>
            <person name="Barry C.E. III"/>
            <person name="Tekaia F."/>
            <person name="Badcock K."/>
            <person name="Basham D."/>
            <person name="Brown D."/>
            <person name="Chillingworth T."/>
            <person name="Connor R."/>
            <person name="Davies R.M."/>
            <person name="Devlin K."/>
            <person name="Feltwell T."/>
            <person name="Gentles S."/>
            <person name="Hamlin N."/>
            <person name="Holroyd S."/>
            <person name="Hornsby T."/>
            <person name="Jagels K."/>
            <person name="Krogh A."/>
            <person name="McLean J."/>
            <person name="Moule S."/>
            <person name="Murphy L.D."/>
            <person name="Oliver S."/>
            <person name="Osborne J."/>
            <person name="Quail M.A."/>
            <person name="Rajandream M.A."/>
            <person name="Rogers J."/>
            <person name="Rutter S."/>
            <person name="Seeger K."/>
            <person name="Skelton S."/>
            <person name="Squares S."/>
            <person name="Squares R."/>
            <person name="Sulston J.E."/>
            <person name="Taylor K."/>
            <person name="Whitehead S."/>
            <person name="Barrell B.G."/>
        </authorList>
    </citation>
    <scope>NUCLEOTIDE SEQUENCE [LARGE SCALE GENOMIC DNA]</scope>
    <source>
        <strain>ATCC 25618 / H37Rv</strain>
    </source>
</reference>
<reference key="2">
    <citation type="journal article" date="2011" name="Mol. Cell. Proteomics">
        <title>Proteogenomic analysis of Mycobacterium tuberculosis by high resolution mass spectrometry.</title>
        <authorList>
            <person name="Kelkar D.S."/>
            <person name="Kumar D."/>
            <person name="Kumar P."/>
            <person name="Balakrishnan L."/>
            <person name="Muthusamy B."/>
            <person name="Yadav A.K."/>
            <person name="Shrivastava P."/>
            <person name="Marimuthu A."/>
            <person name="Anand S."/>
            <person name="Sundaram H."/>
            <person name="Kingsbury R."/>
            <person name="Harsha H.C."/>
            <person name="Nair B."/>
            <person name="Prasad T.S."/>
            <person name="Chauhan D.S."/>
            <person name="Katoch K."/>
            <person name="Katoch V.M."/>
            <person name="Kumar P."/>
            <person name="Chaerkady R."/>
            <person name="Ramachandran S."/>
            <person name="Dash D."/>
            <person name="Pandey A."/>
        </authorList>
    </citation>
    <scope>IDENTIFICATION BY MASS SPECTROMETRY [LARGE SCALE ANALYSIS]</scope>
    <source>
        <strain>ATCC 25618 / H37Rv</strain>
    </source>
</reference>
<reference evidence="3" key="3">
    <citation type="submission" date="2007-10" db="PDB data bank">
        <title>2.1 A crystal structure of RNase PH from Mycobacterium tuberculosis.</title>
        <authorList>
            <person name="Antczak A.J."/>
            <person name="Lekin T."/>
            <person name="Segelke B.W."/>
            <person name="Berger J.M."/>
        </authorList>
    </citation>
    <scope>X-RAY CRYSTALLOGRAPHY (2.10 ANGSTROMS) OF 2-259 IN COMPLEX WITH SUBSTRATE</scope>
    <scope>SUBUNIT</scope>
</reference>
<keyword id="KW-0002">3D-structure</keyword>
<keyword id="KW-0548">Nucleotidyltransferase</keyword>
<keyword id="KW-1185">Reference proteome</keyword>
<keyword id="KW-0694">RNA-binding</keyword>
<keyword id="KW-0698">rRNA processing</keyword>
<keyword id="KW-0808">Transferase</keyword>
<keyword id="KW-0819">tRNA processing</keyword>
<keyword id="KW-0820">tRNA-binding</keyword>
<comment type="function">
    <text evidence="1">Phosphorolytic 3'-5' exoribonuclease that plays an important role in tRNA 3'-end maturation. Removes nucleotide residues following the 3'-CCA terminus of tRNAs; can also add nucleotides to the ends of RNA molecules by using nucleoside diphosphates as substrates, but this may not be physiologically important. Probably plays a role in initiation of 16S rRNA degradation (leading to ribosome degradation) during starvation.</text>
</comment>
<comment type="catalytic activity">
    <reaction evidence="1">
        <text>tRNA(n+1) + phosphate = tRNA(n) + a ribonucleoside 5'-diphosphate</text>
        <dbReference type="Rhea" id="RHEA:10628"/>
        <dbReference type="Rhea" id="RHEA-COMP:17343"/>
        <dbReference type="Rhea" id="RHEA-COMP:17344"/>
        <dbReference type="ChEBI" id="CHEBI:43474"/>
        <dbReference type="ChEBI" id="CHEBI:57930"/>
        <dbReference type="ChEBI" id="CHEBI:173114"/>
        <dbReference type="EC" id="2.7.7.56"/>
    </reaction>
</comment>
<comment type="subunit">
    <text evidence="1 2">Homohexameric ring arranged as a trimer of dimers (Ref.3).</text>
</comment>
<comment type="similarity">
    <text evidence="1">Belongs to the RNase PH family.</text>
</comment>
<evidence type="ECO:0000255" key="1">
    <source>
        <dbReference type="HAMAP-Rule" id="MF_00564"/>
    </source>
</evidence>
<evidence type="ECO:0000305" key="2">
    <source ref="3"/>
</evidence>
<evidence type="ECO:0007744" key="3">
    <source>
        <dbReference type="PDB" id="3B4T"/>
    </source>
</evidence>
<evidence type="ECO:0007829" key="4">
    <source>
        <dbReference type="PDB" id="3B4T"/>
    </source>
</evidence>
<accession>P9WGZ7</accession>
<accession>L0T9C5</accession>
<accession>Q10628</accession>
<organism>
    <name type="scientific">Mycobacterium tuberculosis (strain ATCC 25618 / H37Rv)</name>
    <dbReference type="NCBI Taxonomy" id="83332"/>
    <lineage>
        <taxon>Bacteria</taxon>
        <taxon>Bacillati</taxon>
        <taxon>Actinomycetota</taxon>
        <taxon>Actinomycetes</taxon>
        <taxon>Mycobacteriales</taxon>
        <taxon>Mycobacteriaceae</taxon>
        <taxon>Mycobacterium</taxon>
        <taxon>Mycobacterium tuberculosis complex</taxon>
    </lineage>
</organism>
<dbReference type="EC" id="2.7.7.56" evidence="1"/>
<dbReference type="EMBL" id="AL123456">
    <property type="protein sequence ID" value="CCP44098.1"/>
    <property type="molecule type" value="Genomic_DNA"/>
</dbReference>
<dbReference type="PIR" id="C70739">
    <property type="entry name" value="C70739"/>
</dbReference>
<dbReference type="RefSeq" id="NP_215856.1">
    <property type="nucleotide sequence ID" value="NC_000962.3"/>
</dbReference>
<dbReference type="RefSeq" id="WP_003406926.1">
    <property type="nucleotide sequence ID" value="NZ_NVQJ01000031.1"/>
</dbReference>
<dbReference type="PDB" id="3B4T">
    <property type="method" value="X-ray"/>
    <property type="resolution" value="2.10 A"/>
    <property type="chains" value="A/B/C/D/E/F=2-259"/>
</dbReference>
<dbReference type="PDBsum" id="3B4T"/>
<dbReference type="SMR" id="P9WGZ7"/>
<dbReference type="FunCoup" id="P9WGZ7">
    <property type="interactions" value="278"/>
</dbReference>
<dbReference type="STRING" id="83332.Rv1340"/>
<dbReference type="PaxDb" id="83332-Rv1340"/>
<dbReference type="DNASU" id="886864"/>
<dbReference type="GeneID" id="886864"/>
<dbReference type="KEGG" id="mtu:Rv1340"/>
<dbReference type="KEGG" id="mtv:RVBD_1340"/>
<dbReference type="TubercuList" id="Rv1340"/>
<dbReference type="eggNOG" id="COG2123">
    <property type="taxonomic scope" value="Bacteria"/>
</dbReference>
<dbReference type="InParanoid" id="P9WGZ7"/>
<dbReference type="OrthoDB" id="9802265at2"/>
<dbReference type="PhylomeDB" id="P9WGZ7"/>
<dbReference type="EvolutionaryTrace" id="P9WGZ7"/>
<dbReference type="Proteomes" id="UP000001584">
    <property type="component" value="Chromosome"/>
</dbReference>
<dbReference type="GO" id="GO:0005886">
    <property type="term" value="C:plasma membrane"/>
    <property type="evidence" value="ECO:0007005"/>
    <property type="project" value="MTBBASE"/>
</dbReference>
<dbReference type="GO" id="GO:0000175">
    <property type="term" value="F:3'-5'-RNA exonuclease activity"/>
    <property type="evidence" value="ECO:0007669"/>
    <property type="project" value="UniProtKB-UniRule"/>
</dbReference>
<dbReference type="GO" id="GO:0003723">
    <property type="term" value="F:RNA binding"/>
    <property type="evidence" value="ECO:0000318"/>
    <property type="project" value="GO_Central"/>
</dbReference>
<dbReference type="GO" id="GO:0000049">
    <property type="term" value="F:tRNA binding"/>
    <property type="evidence" value="ECO:0007669"/>
    <property type="project" value="UniProtKB-UniRule"/>
</dbReference>
<dbReference type="GO" id="GO:0009022">
    <property type="term" value="F:tRNA nucleotidyltransferase activity"/>
    <property type="evidence" value="ECO:0007669"/>
    <property type="project" value="UniProtKB-UniRule"/>
</dbReference>
<dbReference type="GO" id="GO:0016075">
    <property type="term" value="P:rRNA catabolic process"/>
    <property type="evidence" value="ECO:0000318"/>
    <property type="project" value="GO_Central"/>
</dbReference>
<dbReference type="GO" id="GO:0006364">
    <property type="term" value="P:rRNA processing"/>
    <property type="evidence" value="ECO:0007669"/>
    <property type="project" value="UniProtKB-KW"/>
</dbReference>
<dbReference type="GO" id="GO:0008033">
    <property type="term" value="P:tRNA processing"/>
    <property type="evidence" value="ECO:0007669"/>
    <property type="project" value="UniProtKB-UniRule"/>
</dbReference>
<dbReference type="CDD" id="cd11362">
    <property type="entry name" value="RNase_PH_bact"/>
    <property type="match status" value="1"/>
</dbReference>
<dbReference type="FunFam" id="3.30.230.70:FF:000003">
    <property type="entry name" value="Ribonuclease PH"/>
    <property type="match status" value="1"/>
</dbReference>
<dbReference type="Gene3D" id="3.30.230.70">
    <property type="entry name" value="GHMP Kinase, N-terminal domain"/>
    <property type="match status" value="1"/>
</dbReference>
<dbReference type="HAMAP" id="MF_00564">
    <property type="entry name" value="RNase_PH"/>
    <property type="match status" value="1"/>
</dbReference>
<dbReference type="InterPro" id="IPR001247">
    <property type="entry name" value="ExoRNase_PH_dom1"/>
</dbReference>
<dbReference type="InterPro" id="IPR015847">
    <property type="entry name" value="ExoRNase_PH_dom2"/>
</dbReference>
<dbReference type="InterPro" id="IPR036345">
    <property type="entry name" value="ExoRNase_PH_dom2_sf"/>
</dbReference>
<dbReference type="InterPro" id="IPR027408">
    <property type="entry name" value="PNPase/RNase_PH_dom_sf"/>
</dbReference>
<dbReference type="InterPro" id="IPR020568">
    <property type="entry name" value="Ribosomal_Su5_D2-typ_SF"/>
</dbReference>
<dbReference type="InterPro" id="IPR050080">
    <property type="entry name" value="RNase_PH"/>
</dbReference>
<dbReference type="InterPro" id="IPR002381">
    <property type="entry name" value="RNase_PH_bac-type"/>
</dbReference>
<dbReference type="InterPro" id="IPR018336">
    <property type="entry name" value="RNase_PH_CS"/>
</dbReference>
<dbReference type="NCBIfam" id="TIGR01966">
    <property type="entry name" value="RNasePH"/>
    <property type="match status" value="1"/>
</dbReference>
<dbReference type="PANTHER" id="PTHR11953">
    <property type="entry name" value="EXOSOME COMPLEX COMPONENT"/>
    <property type="match status" value="1"/>
</dbReference>
<dbReference type="PANTHER" id="PTHR11953:SF0">
    <property type="entry name" value="EXOSOME COMPLEX COMPONENT RRP41"/>
    <property type="match status" value="1"/>
</dbReference>
<dbReference type="Pfam" id="PF01138">
    <property type="entry name" value="RNase_PH"/>
    <property type="match status" value="1"/>
</dbReference>
<dbReference type="Pfam" id="PF03725">
    <property type="entry name" value="RNase_PH_C"/>
    <property type="match status" value="1"/>
</dbReference>
<dbReference type="SUPFAM" id="SSF55666">
    <property type="entry name" value="Ribonuclease PH domain 2-like"/>
    <property type="match status" value="1"/>
</dbReference>
<dbReference type="SUPFAM" id="SSF54211">
    <property type="entry name" value="Ribosomal protein S5 domain 2-like"/>
    <property type="match status" value="1"/>
</dbReference>
<dbReference type="PROSITE" id="PS01277">
    <property type="entry name" value="RIBONUCLEASE_PH"/>
    <property type="match status" value="1"/>
</dbReference>
<feature type="chain" id="PRO_0000139912" description="Ribonuclease PH">
    <location>
        <begin position="1"/>
        <end position="259"/>
    </location>
</feature>
<feature type="binding site" evidence="1">
    <location>
        <position position="88"/>
    </location>
    <ligand>
        <name>phosphate</name>
        <dbReference type="ChEBI" id="CHEBI:43474"/>
        <note>substrate</note>
    </ligand>
</feature>
<feature type="binding site" evidence="1 2">
    <location>
        <begin position="126"/>
        <end position="128"/>
    </location>
    <ligand>
        <name>phosphate</name>
        <dbReference type="ChEBI" id="CHEBI:43474"/>
        <note>substrate</note>
    </ligand>
</feature>
<feature type="strand" evidence="4">
    <location>
        <begin position="16"/>
        <end position="20"/>
    </location>
</feature>
<feature type="strand" evidence="4">
    <location>
        <begin position="22"/>
        <end position="34"/>
    </location>
</feature>
<feature type="strand" evidence="4">
    <location>
        <begin position="37"/>
        <end position="48"/>
    </location>
</feature>
<feature type="strand" evidence="4">
    <location>
        <begin position="60"/>
        <end position="67"/>
    </location>
</feature>
<feature type="helix" evidence="4">
    <location>
        <begin position="69"/>
        <end position="71"/>
    </location>
</feature>
<feature type="strand" evidence="4">
    <location>
        <begin position="72"/>
        <end position="74"/>
    </location>
</feature>
<feature type="helix" evidence="4">
    <location>
        <begin position="79"/>
        <end position="82"/>
    </location>
</feature>
<feature type="helix" evidence="4">
    <location>
        <begin position="87"/>
        <end position="101"/>
    </location>
</feature>
<feature type="helix" evidence="4">
    <location>
        <begin position="106"/>
        <end position="109"/>
    </location>
</feature>
<feature type="strand" evidence="4">
    <location>
        <begin position="111"/>
        <end position="122"/>
    </location>
</feature>
<feature type="helix" evidence="4">
    <location>
        <begin position="127"/>
        <end position="148"/>
    </location>
</feature>
<feature type="strand" evidence="4">
    <location>
        <begin position="153"/>
        <end position="155"/>
    </location>
</feature>
<feature type="strand" evidence="4">
    <location>
        <begin position="162"/>
        <end position="170"/>
    </location>
</feature>
<feature type="strand" evidence="4">
    <location>
        <begin position="173"/>
        <end position="177"/>
    </location>
</feature>
<feature type="helix" evidence="4">
    <location>
        <begin position="180"/>
        <end position="183"/>
    </location>
</feature>
<feature type="strand" evidence="4">
    <location>
        <begin position="187"/>
        <end position="195"/>
    </location>
</feature>
<feature type="strand" evidence="4">
    <location>
        <begin position="200"/>
        <end position="205"/>
    </location>
</feature>
<feature type="helix" evidence="4">
    <location>
        <begin position="214"/>
        <end position="239"/>
    </location>
</feature>
<gene>
    <name evidence="1" type="primary">rph</name>
    <name type="synonym">rphA</name>
    <name type="ordered locus">Rv1340</name>
    <name type="ORF">MTCY02B10.04</name>
    <name type="ORF">MTCY130.25</name>
</gene>
<sequence>MSKREDGRLDHELRPVIITRGFTENPAGSVLIEFGHTKVLCTASVTEGVPRWRKATGLGWLTAEYAMLPSATHSRSDRESVRGRLSGRTQEISRLIGRSLRACIDLAALGENTIAIDCDVLQADGGTRTAAITGAYVALADAVTYLSAAGKLSDPRPLSCAIAAVSVGVVDGRIRVDLPYEEDSRAEVDMNVVATDTGTLVEIQGTGEGATFARSTLDKLLDMALGACDTLFAAQRDALALPYPGVLPQGPPPPKAFGT</sequence>
<name>RNPH_MYCTU</name>
<protein>
    <recommendedName>
        <fullName evidence="1">Ribonuclease PH</fullName>
        <shortName evidence="1">RNase PH</shortName>
        <ecNumber evidence="1">2.7.7.56</ecNumber>
    </recommendedName>
    <alternativeName>
        <fullName evidence="1">tRNA nucleotidyltransferase</fullName>
    </alternativeName>
</protein>